<accession>B4SUR7</accession>
<evidence type="ECO:0000255" key="1">
    <source>
        <dbReference type="HAMAP-Rule" id="MF_01306"/>
    </source>
</evidence>
<evidence type="ECO:0000305" key="2"/>
<organism>
    <name type="scientific">Salmonella newport (strain SL254)</name>
    <dbReference type="NCBI Taxonomy" id="423368"/>
    <lineage>
        <taxon>Bacteria</taxon>
        <taxon>Pseudomonadati</taxon>
        <taxon>Pseudomonadota</taxon>
        <taxon>Gammaproteobacteria</taxon>
        <taxon>Enterobacterales</taxon>
        <taxon>Enterobacteriaceae</taxon>
        <taxon>Salmonella</taxon>
    </lineage>
</organism>
<sequence>MARYLGPKLKLSRREGTDLFLKSGVRAIDTKCKIEQAPGQHGARKPRLSDYGVQLREKQKVRRIYGVLERQFRNYYKEAARLKGNTGENLLALLEGRLDNVVYRMGFGATRAEARQLVSHKAIMVNGRVVNIASYQVSPNDVVSIREKAKKQSRVKAALELAEQREKPTWLEVDAGKMEGTYKRKPERSDLSADINEHLIVELYSK</sequence>
<protein>
    <recommendedName>
        <fullName evidence="1">Small ribosomal subunit protein uS4</fullName>
    </recommendedName>
    <alternativeName>
        <fullName evidence="2">30S ribosomal protein S4</fullName>
    </alternativeName>
</protein>
<name>RS4_SALNS</name>
<dbReference type="EMBL" id="CP001113">
    <property type="protein sequence ID" value="ACF64163.1"/>
    <property type="molecule type" value="Genomic_DNA"/>
</dbReference>
<dbReference type="RefSeq" id="WP_000135226.1">
    <property type="nucleotide sequence ID" value="NZ_CCMR01000003.1"/>
</dbReference>
<dbReference type="SMR" id="B4SUR7"/>
<dbReference type="GeneID" id="93035755"/>
<dbReference type="KEGG" id="see:SNSL254_A3684"/>
<dbReference type="HOGENOM" id="CLU_092403_0_2_6"/>
<dbReference type="Proteomes" id="UP000008824">
    <property type="component" value="Chromosome"/>
</dbReference>
<dbReference type="GO" id="GO:0015935">
    <property type="term" value="C:small ribosomal subunit"/>
    <property type="evidence" value="ECO:0007669"/>
    <property type="project" value="InterPro"/>
</dbReference>
<dbReference type="GO" id="GO:0019843">
    <property type="term" value="F:rRNA binding"/>
    <property type="evidence" value="ECO:0007669"/>
    <property type="project" value="UniProtKB-UniRule"/>
</dbReference>
<dbReference type="GO" id="GO:0003735">
    <property type="term" value="F:structural constituent of ribosome"/>
    <property type="evidence" value="ECO:0007669"/>
    <property type="project" value="InterPro"/>
</dbReference>
<dbReference type="GO" id="GO:0042274">
    <property type="term" value="P:ribosomal small subunit biogenesis"/>
    <property type="evidence" value="ECO:0007669"/>
    <property type="project" value="TreeGrafter"/>
</dbReference>
<dbReference type="GO" id="GO:0006412">
    <property type="term" value="P:translation"/>
    <property type="evidence" value="ECO:0007669"/>
    <property type="project" value="UniProtKB-UniRule"/>
</dbReference>
<dbReference type="CDD" id="cd00165">
    <property type="entry name" value="S4"/>
    <property type="match status" value="1"/>
</dbReference>
<dbReference type="FunFam" id="1.10.1050.10:FF:000001">
    <property type="entry name" value="30S ribosomal protein S4"/>
    <property type="match status" value="1"/>
</dbReference>
<dbReference type="FunFam" id="3.10.290.10:FF:000001">
    <property type="entry name" value="30S ribosomal protein S4"/>
    <property type="match status" value="1"/>
</dbReference>
<dbReference type="Gene3D" id="1.10.1050.10">
    <property type="entry name" value="Ribosomal Protein S4 Delta 41, Chain A, domain 1"/>
    <property type="match status" value="1"/>
</dbReference>
<dbReference type="Gene3D" id="3.10.290.10">
    <property type="entry name" value="RNA-binding S4 domain"/>
    <property type="match status" value="1"/>
</dbReference>
<dbReference type="HAMAP" id="MF_01306_B">
    <property type="entry name" value="Ribosomal_uS4_B"/>
    <property type="match status" value="1"/>
</dbReference>
<dbReference type="InterPro" id="IPR022801">
    <property type="entry name" value="Ribosomal_uS4"/>
</dbReference>
<dbReference type="InterPro" id="IPR005709">
    <property type="entry name" value="Ribosomal_uS4_bac-type"/>
</dbReference>
<dbReference type="InterPro" id="IPR018079">
    <property type="entry name" value="Ribosomal_uS4_CS"/>
</dbReference>
<dbReference type="InterPro" id="IPR001912">
    <property type="entry name" value="Ribosomal_uS4_N"/>
</dbReference>
<dbReference type="InterPro" id="IPR002942">
    <property type="entry name" value="S4_RNA-bd"/>
</dbReference>
<dbReference type="InterPro" id="IPR036986">
    <property type="entry name" value="S4_RNA-bd_sf"/>
</dbReference>
<dbReference type="NCBIfam" id="NF003717">
    <property type="entry name" value="PRK05327.1"/>
    <property type="match status" value="1"/>
</dbReference>
<dbReference type="NCBIfam" id="TIGR01017">
    <property type="entry name" value="rpsD_bact"/>
    <property type="match status" value="1"/>
</dbReference>
<dbReference type="PANTHER" id="PTHR11831">
    <property type="entry name" value="30S 40S RIBOSOMAL PROTEIN"/>
    <property type="match status" value="1"/>
</dbReference>
<dbReference type="PANTHER" id="PTHR11831:SF4">
    <property type="entry name" value="SMALL RIBOSOMAL SUBUNIT PROTEIN US4M"/>
    <property type="match status" value="1"/>
</dbReference>
<dbReference type="Pfam" id="PF00163">
    <property type="entry name" value="Ribosomal_S4"/>
    <property type="match status" value="1"/>
</dbReference>
<dbReference type="Pfam" id="PF01479">
    <property type="entry name" value="S4"/>
    <property type="match status" value="1"/>
</dbReference>
<dbReference type="SMART" id="SM01390">
    <property type="entry name" value="Ribosomal_S4"/>
    <property type="match status" value="1"/>
</dbReference>
<dbReference type="SMART" id="SM00363">
    <property type="entry name" value="S4"/>
    <property type="match status" value="1"/>
</dbReference>
<dbReference type="SUPFAM" id="SSF55174">
    <property type="entry name" value="Alpha-L RNA-binding motif"/>
    <property type="match status" value="1"/>
</dbReference>
<dbReference type="PROSITE" id="PS00632">
    <property type="entry name" value="RIBOSOMAL_S4"/>
    <property type="match status" value="1"/>
</dbReference>
<dbReference type="PROSITE" id="PS50889">
    <property type="entry name" value="S4"/>
    <property type="match status" value="1"/>
</dbReference>
<proteinExistence type="inferred from homology"/>
<reference key="1">
    <citation type="journal article" date="2011" name="J. Bacteriol.">
        <title>Comparative genomics of 28 Salmonella enterica isolates: evidence for CRISPR-mediated adaptive sublineage evolution.</title>
        <authorList>
            <person name="Fricke W.F."/>
            <person name="Mammel M.K."/>
            <person name="McDermott P.F."/>
            <person name="Tartera C."/>
            <person name="White D.G."/>
            <person name="Leclerc J.E."/>
            <person name="Ravel J."/>
            <person name="Cebula T.A."/>
        </authorList>
    </citation>
    <scope>NUCLEOTIDE SEQUENCE [LARGE SCALE GENOMIC DNA]</scope>
    <source>
        <strain>SL254</strain>
    </source>
</reference>
<comment type="function">
    <text evidence="1">One of the primary rRNA binding proteins, it binds directly to 16S rRNA where it nucleates assembly of the body of the 30S subunit.</text>
</comment>
<comment type="function">
    <text evidence="1">With S5 and S12 plays an important role in translational accuracy.</text>
</comment>
<comment type="subunit">
    <text evidence="1">Part of the 30S ribosomal subunit. Contacts protein S5. The interaction surface between S4 and S5 is involved in control of translational fidelity.</text>
</comment>
<comment type="similarity">
    <text evidence="1">Belongs to the universal ribosomal protein uS4 family.</text>
</comment>
<feature type="chain" id="PRO_1000140789" description="Small ribosomal subunit protein uS4">
    <location>
        <begin position="1"/>
        <end position="206"/>
    </location>
</feature>
<feature type="domain" description="S4 RNA-binding" evidence="1">
    <location>
        <begin position="96"/>
        <end position="156"/>
    </location>
</feature>
<gene>
    <name evidence="1" type="primary">rpsD</name>
    <name type="ordered locus">SNSL254_A3684</name>
</gene>
<keyword id="KW-0687">Ribonucleoprotein</keyword>
<keyword id="KW-0689">Ribosomal protein</keyword>
<keyword id="KW-0694">RNA-binding</keyword>
<keyword id="KW-0699">rRNA-binding</keyword>